<proteinExistence type="inferred from homology"/>
<name>AROQ_XANCB</name>
<accession>B0RN47</accession>
<organism>
    <name type="scientific">Xanthomonas campestris pv. campestris (strain B100)</name>
    <dbReference type="NCBI Taxonomy" id="509169"/>
    <lineage>
        <taxon>Bacteria</taxon>
        <taxon>Pseudomonadati</taxon>
        <taxon>Pseudomonadota</taxon>
        <taxon>Gammaproteobacteria</taxon>
        <taxon>Lysobacterales</taxon>
        <taxon>Lysobacteraceae</taxon>
        <taxon>Xanthomonas</taxon>
    </lineage>
</organism>
<gene>
    <name evidence="1" type="primary">aroQ</name>
    <name type="ordered locus">xcc-b100_0548</name>
</gene>
<evidence type="ECO:0000255" key="1">
    <source>
        <dbReference type="HAMAP-Rule" id="MF_00169"/>
    </source>
</evidence>
<reference key="1">
    <citation type="journal article" date="2008" name="J. Biotechnol.">
        <title>The genome of Xanthomonas campestris pv. campestris B100 and its use for the reconstruction of metabolic pathways involved in xanthan biosynthesis.</title>
        <authorList>
            <person name="Vorhoelter F.-J."/>
            <person name="Schneiker S."/>
            <person name="Goesmann A."/>
            <person name="Krause L."/>
            <person name="Bekel T."/>
            <person name="Kaiser O."/>
            <person name="Linke B."/>
            <person name="Patschkowski T."/>
            <person name="Rueckert C."/>
            <person name="Schmid J."/>
            <person name="Sidhu V.K."/>
            <person name="Sieber V."/>
            <person name="Tauch A."/>
            <person name="Watt S.A."/>
            <person name="Weisshaar B."/>
            <person name="Becker A."/>
            <person name="Niehaus K."/>
            <person name="Puehler A."/>
        </authorList>
    </citation>
    <scope>NUCLEOTIDE SEQUENCE [LARGE SCALE GENOMIC DNA]</scope>
    <source>
        <strain>B100</strain>
    </source>
</reference>
<comment type="function">
    <text evidence="1">Catalyzes a trans-dehydration via an enolate intermediate.</text>
</comment>
<comment type="catalytic activity">
    <reaction evidence="1">
        <text>3-dehydroquinate = 3-dehydroshikimate + H2O</text>
        <dbReference type="Rhea" id="RHEA:21096"/>
        <dbReference type="ChEBI" id="CHEBI:15377"/>
        <dbReference type="ChEBI" id="CHEBI:16630"/>
        <dbReference type="ChEBI" id="CHEBI:32364"/>
        <dbReference type="EC" id="4.2.1.10"/>
    </reaction>
</comment>
<comment type="pathway">
    <text evidence="1">Metabolic intermediate biosynthesis; chorismate biosynthesis; chorismate from D-erythrose 4-phosphate and phosphoenolpyruvate: step 3/7.</text>
</comment>
<comment type="subunit">
    <text evidence="1">Homododecamer.</text>
</comment>
<comment type="similarity">
    <text evidence="1">Belongs to the type-II 3-dehydroquinase family.</text>
</comment>
<keyword id="KW-0028">Amino-acid biosynthesis</keyword>
<keyword id="KW-0057">Aromatic amino acid biosynthesis</keyword>
<keyword id="KW-0456">Lyase</keyword>
<protein>
    <recommendedName>
        <fullName evidence="1">3-dehydroquinate dehydratase</fullName>
        <shortName evidence="1">3-dehydroquinase</shortName>
        <ecNumber evidence="1">4.2.1.10</ecNumber>
    </recommendedName>
    <alternativeName>
        <fullName evidence="1">Type II DHQase</fullName>
    </alternativeName>
</protein>
<dbReference type="EC" id="4.2.1.10" evidence="1"/>
<dbReference type="EMBL" id="AM920689">
    <property type="protein sequence ID" value="CAP49882.1"/>
    <property type="molecule type" value="Genomic_DNA"/>
</dbReference>
<dbReference type="SMR" id="B0RN47"/>
<dbReference type="KEGG" id="xca:xcc-b100_0548"/>
<dbReference type="HOGENOM" id="CLU_090968_1_0_6"/>
<dbReference type="UniPathway" id="UPA00053">
    <property type="reaction ID" value="UER00086"/>
</dbReference>
<dbReference type="Proteomes" id="UP000001188">
    <property type="component" value="Chromosome"/>
</dbReference>
<dbReference type="GO" id="GO:0003855">
    <property type="term" value="F:3-dehydroquinate dehydratase activity"/>
    <property type="evidence" value="ECO:0007669"/>
    <property type="project" value="UniProtKB-UniRule"/>
</dbReference>
<dbReference type="GO" id="GO:0008652">
    <property type="term" value="P:amino acid biosynthetic process"/>
    <property type="evidence" value="ECO:0007669"/>
    <property type="project" value="UniProtKB-KW"/>
</dbReference>
<dbReference type="GO" id="GO:0009073">
    <property type="term" value="P:aromatic amino acid family biosynthetic process"/>
    <property type="evidence" value="ECO:0007669"/>
    <property type="project" value="UniProtKB-KW"/>
</dbReference>
<dbReference type="GO" id="GO:0009423">
    <property type="term" value="P:chorismate biosynthetic process"/>
    <property type="evidence" value="ECO:0007669"/>
    <property type="project" value="UniProtKB-UniRule"/>
</dbReference>
<dbReference type="GO" id="GO:0019631">
    <property type="term" value="P:quinate catabolic process"/>
    <property type="evidence" value="ECO:0007669"/>
    <property type="project" value="TreeGrafter"/>
</dbReference>
<dbReference type="CDD" id="cd00466">
    <property type="entry name" value="DHQase_II"/>
    <property type="match status" value="1"/>
</dbReference>
<dbReference type="Gene3D" id="3.40.50.9100">
    <property type="entry name" value="Dehydroquinase, class II"/>
    <property type="match status" value="1"/>
</dbReference>
<dbReference type="HAMAP" id="MF_00169">
    <property type="entry name" value="AroQ"/>
    <property type="match status" value="1"/>
</dbReference>
<dbReference type="InterPro" id="IPR001874">
    <property type="entry name" value="DHquinase_II"/>
</dbReference>
<dbReference type="InterPro" id="IPR018509">
    <property type="entry name" value="DHquinase_II_CS"/>
</dbReference>
<dbReference type="InterPro" id="IPR036441">
    <property type="entry name" value="DHquinase_II_sf"/>
</dbReference>
<dbReference type="NCBIfam" id="TIGR01088">
    <property type="entry name" value="aroQ"/>
    <property type="match status" value="1"/>
</dbReference>
<dbReference type="NCBIfam" id="NF003804">
    <property type="entry name" value="PRK05395.1-1"/>
    <property type="match status" value="1"/>
</dbReference>
<dbReference type="NCBIfam" id="NF003805">
    <property type="entry name" value="PRK05395.1-2"/>
    <property type="match status" value="1"/>
</dbReference>
<dbReference type="NCBIfam" id="NF003806">
    <property type="entry name" value="PRK05395.1-3"/>
    <property type="match status" value="1"/>
</dbReference>
<dbReference type="NCBIfam" id="NF003807">
    <property type="entry name" value="PRK05395.1-4"/>
    <property type="match status" value="1"/>
</dbReference>
<dbReference type="PANTHER" id="PTHR21272">
    <property type="entry name" value="CATABOLIC 3-DEHYDROQUINASE"/>
    <property type="match status" value="1"/>
</dbReference>
<dbReference type="PANTHER" id="PTHR21272:SF3">
    <property type="entry name" value="CATABOLIC 3-DEHYDROQUINASE"/>
    <property type="match status" value="1"/>
</dbReference>
<dbReference type="Pfam" id="PF01220">
    <property type="entry name" value="DHquinase_II"/>
    <property type="match status" value="1"/>
</dbReference>
<dbReference type="PIRSF" id="PIRSF001399">
    <property type="entry name" value="DHquinase_II"/>
    <property type="match status" value="1"/>
</dbReference>
<dbReference type="SUPFAM" id="SSF52304">
    <property type="entry name" value="Type II 3-dehydroquinate dehydratase"/>
    <property type="match status" value="1"/>
</dbReference>
<dbReference type="PROSITE" id="PS01029">
    <property type="entry name" value="DEHYDROQUINASE_II"/>
    <property type="match status" value="1"/>
</dbReference>
<feature type="chain" id="PRO_1000097633" description="3-dehydroquinate dehydratase">
    <location>
        <begin position="1"/>
        <end position="148"/>
    </location>
</feature>
<feature type="active site" description="Proton acceptor" evidence="1">
    <location>
        <position position="23"/>
    </location>
</feature>
<feature type="active site" description="Proton donor" evidence="1">
    <location>
        <position position="101"/>
    </location>
</feature>
<feature type="binding site" evidence="1">
    <location>
        <position position="75"/>
    </location>
    <ligand>
        <name>substrate</name>
    </ligand>
</feature>
<feature type="binding site" evidence="1">
    <location>
        <position position="81"/>
    </location>
    <ligand>
        <name>substrate</name>
    </ligand>
</feature>
<feature type="binding site" evidence="1">
    <location>
        <position position="88"/>
    </location>
    <ligand>
        <name>substrate</name>
    </ligand>
</feature>
<feature type="binding site" evidence="1">
    <location>
        <begin position="102"/>
        <end position="103"/>
    </location>
    <ligand>
        <name>substrate</name>
    </ligand>
</feature>
<feature type="binding site" evidence="1">
    <location>
        <position position="112"/>
    </location>
    <ligand>
        <name>substrate</name>
    </ligand>
</feature>
<feature type="site" description="Transition state stabilizer" evidence="1">
    <location>
        <position position="18"/>
    </location>
</feature>
<sequence>MAHLLLLHGPNLNLLGTREPEVYGRNTLAQIDAALVDRAQAAGHTLDCLQSNAEHVLVERIHAAREDGTAFILINPAAFTHTSVSLRDALLGVGLPFVEIHLSNPHTREPFRHHSYLSDKAAGVICGFGADSYRLALEAVIARLERDS</sequence>